<reference key="1">
    <citation type="journal article" date="2002" name="Environ. Microbiol.">
        <title>Complete genome sequence and comparative analysis of the metabolically versatile Pseudomonas putida KT2440.</title>
        <authorList>
            <person name="Nelson K.E."/>
            <person name="Weinel C."/>
            <person name="Paulsen I.T."/>
            <person name="Dodson R.J."/>
            <person name="Hilbert H."/>
            <person name="Martins dos Santos V.A.P."/>
            <person name="Fouts D.E."/>
            <person name="Gill S.R."/>
            <person name="Pop M."/>
            <person name="Holmes M."/>
            <person name="Brinkac L.M."/>
            <person name="Beanan M.J."/>
            <person name="DeBoy R.T."/>
            <person name="Daugherty S.C."/>
            <person name="Kolonay J.F."/>
            <person name="Madupu R."/>
            <person name="Nelson W.C."/>
            <person name="White O."/>
            <person name="Peterson J.D."/>
            <person name="Khouri H.M."/>
            <person name="Hance I."/>
            <person name="Chris Lee P."/>
            <person name="Holtzapple E.K."/>
            <person name="Scanlan D."/>
            <person name="Tran K."/>
            <person name="Moazzez A."/>
            <person name="Utterback T.R."/>
            <person name="Rizzo M."/>
            <person name="Lee K."/>
            <person name="Kosack D."/>
            <person name="Moestl D."/>
            <person name="Wedler H."/>
            <person name="Lauber J."/>
            <person name="Stjepandic D."/>
            <person name="Hoheisel J."/>
            <person name="Straetz M."/>
            <person name="Heim S."/>
            <person name="Kiewitz C."/>
            <person name="Eisen J.A."/>
            <person name="Timmis K.N."/>
            <person name="Duesterhoeft A."/>
            <person name="Tuemmler B."/>
            <person name="Fraser C.M."/>
        </authorList>
    </citation>
    <scope>NUCLEOTIDE SEQUENCE [LARGE SCALE GENOMIC DNA]</scope>
    <source>
        <strain>ATCC 47054 / DSM 6125 / CFBP 8728 / NCIMB 11950 / KT2440</strain>
    </source>
</reference>
<comment type="function">
    <text evidence="1">Bidirectionally degrades single-stranded DNA into large acid-insoluble oligonucleotides, which are then degraded further into small acid-soluble oligonucleotides.</text>
</comment>
<comment type="catalytic activity">
    <reaction evidence="1">
        <text>Exonucleolytic cleavage in either 5'- to 3'- or 3'- to 5'-direction to yield nucleoside 5'-phosphates.</text>
        <dbReference type="EC" id="3.1.11.6"/>
    </reaction>
</comment>
<comment type="subunit">
    <text evidence="1">Heterooligomer composed of large and small subunits.</text>
</comment>
<comment type="subcellular location">
    <subcellularLocation>
        <location evidence="1">Cytoplasm</location>
    </subcellularLocation>
</comment>
<comment type="similarity">
    <text evidence="1">Belongs to the XseB family.</text>
</comment>
<keyword id="KW-0963">Cytoplasm</keyword>
<keyword id="KW-0269">Exonuclease</keyword>
<keyword id="KW-0378">Hydrolase</keyword>
<keyword id="KW-0540">Nuclease</keyword>
<keyword id="KW-1185">Reference proteome</keyword>
<proteinExistence type="inferred from homology"/>
<name>EX7S_PSEPK</name>
<organism>
    <name type="scientific">Pseudomonas putida (strain ATCC 47054 / DSM 6125 / CFBP 8728 / NCIMB 11950 / KT2440)</name>
    <dbReference type="NCBI Taxonomy" id="160488"/>
    <lineage>
        <taxon>Bacteria</taxon>
        <taxon>Pseudomonadati</taxon>
        <taxon>Pseudomonadota</taxon>
        <taxon>Gammaproteobacteria</taxon>
        <taxon>Pseudomonadales</taxon>
        <taxon>Pseudomonadaceae</taxon>
        <taxon>Pseudomonas</taxon>
    </lineage>
</organism>
<dbReference type="EC" id="3.1.11.6" evidence="1"/>
<dbReference type="EMBL" id="AE015451">
    <property type="protein sequence ID" value="AAN66156.1"/>
    <property type="molecule type" value="Genomic_DNA"/>
</dbReference>
<dbReference type="RefSeq" id="NP_742692.1">
    <property type="nucleotide sequence ID" value="NC_002947.4"/>
</dbReference>
<dbReference type="RefSeq" id="WP_003255380.1">
    <property type="nucleotide sequence ID" value="NZ_CP169744.1"/>
</dbReference>
<dbReference type="SMR" id="Q88QG5"/>
<dbReference type="STRING" id="160488.PP_0529"/>
<dbReference type="PaxDb" id="160488-PP_0529"/>
<dbReference type="KEGG" id="ppu:PP_0529"/>
<dbReference type="PATRIC" id="fig|160488.4.peg.565"/>
<dbReference type="eggNOG" id="COG1722">
    <property type="taxonomic scope" value="Bacteria"/>
</dbReference>
<dbReference type="HOGENOM" id="CLU_145918_3_3_6"/>
<dbReference type="OrthoDB" id="9801128at2"/>
<dbReference type="PhylomeDB" id="Q88QG5"/>
<dbReference type="BioCyc" id="PPUT160488:G1G01-578-MONOMER"/>
<dbReference type="Proteomes" id="UP000000556">
    <property type="component" value="Chromosome"/>
</dbReference>
<dbReference type="GO" id="GO:0005829">
    <property type="term" value="C:cytosol"/>
    <property type="evidence" value="ECO:0007669"/>
    <property type="project" value="TreeGrafter"/>
</dbReference>
<dbReference type="GO" id="GO:0009318">
    <property type="term" value="C:exodeoxyribonuclease VII complex"/>
    <property type="evidence" value="ECO:0007669"/>
    <property type="project" value="InterPro"/>
</dbReference>
<dbReference type="GO" id="GO:0008855">
    <property type="term" value="F:exodeoxyribonuclease VII activity"/>
    <property type="evidence" value="ECO:0007669"/>
    <property type="project" value="UniProtKB-UniRule"/>
</dbReference>
<dbReference type="GO" id="GO:0006308">
    <property type="term" value="P:DNA catabolic process"/>
    <property type="evidence" value="ECO:0007669"/>
    <property type="project" value="UniProtKB-UniRule"/>
</dbReference>
<dbReference type="Gene3D" id="1.10.287.1040">
    <property type="entry name" value="Exonuclease VII, small subunit"/>
    <property type="match status" value="1"/>
</dbReference>
<dbReference type="HAMAP" id="MF_00337">
    <property type="entry name" value="Exonuc_7_S"/>
    <property type="match status" value="1"/>
</dbReference>
<dbReference type="InterPro" id="IPR003761">
    <property type="entry name" value="Exonuc_VII_S"/>
</dbReference>
<dbReference type="InterPro" id="IPR037004">
    <property type="entry name" value="Exonuc_VII_ssu_sf"/>
</dbReference>
<dbReference type="NCBIfam" id="NF002140">
    <property type="entry name" value="PRK00977.1-4"/>
    <property type="match status" value="1"/>
</dbReference>
<dbReference type="NCBIfam" id="TIGR01280">
    <property type="entry name" value="xseB"/>
    <property type="match status" value="1"/>
</dbReference>
<dbReference type="PANTHER" id="PTHR34137">
    <property type="entry name" value="EXODEOXYRIBONUCLEASE 7 SMALL SUBUNIT"/>
    <property type="match status" value="1"/>
</dbReference>
<dbReference type="PANTHER" id="PTHR34137:SF1">
    <property type="entry name" value="EXODEOXYRIBONUCLEASE 7 SMALL SUBUNIT"/>
    <property type="match status" value="1"/>
</dbReference>
<dbReference type="Pfam" id="PF02609">
    <property type="entry name" value="Exonuc_VII_S"/>
    <property type="match status" value="1"/>
</dbReference>
<dbReference type="PIRSF" id="PIRSF006488">
    <property type="entry name" value="Exonuc_VII_S"/>
    <property type="match status" value="1"/>
</dbReference>
<dbReference type="SUPFAM" id="SSF116842">
    <property type="entry name" value="XseB-like"/>
    <property type="match status" value="1"/>
</dbReference>
<protein>
    <recommendedName>
        <fullName evidence="1">Exodeoxyribonuclease 7 small subunit</fullName>
        <ecNumber evidence="1">3.1.11.6</ecNumber>
    </recommendedName>
    <alternativeName>
        <fullName evidence="1">Exodeoxyribonuclease VII small subunit</fullName>
        <shortName evidence="1">Exonuclease VII small subunit</shortName>
    </alternativeName>
</protein>
<sequence>MARKKASLDFEQSLADLQALVERLENGELSLEESLAAFEQGIALTRDCQGALAQAEQKVQILLERDGELAAQPFDAEPEA</sequence>
<gene>
    <name evidence="1" type="primary">xseB</name>
    <name type="ordered locus">PP_0529</name>
</gene>
<accession>Q88QG5</accession>
<feature type="chain" id="PRO_0000206989" description="Exodeoxyribonuclease 7 small subunit">
    <location>
        <begin position="1"/>
        <end position="80"/>
    </location>
</feature>
<evidence type="ECO:0000255" key="1">
    <source>
        <dbReference type="HAMAP-Rule" id="MF_00337"/>
    </source>
</evidence>